<gene>
    <name type="primary">recX</name>
    <name type="ordered locus">BQ2027_MB2755C</name>
</gene>
<proteinExistence type="inferred from homology"/>
<sequence length="174" mass="19146">MTVSCPPPSTSEREEQARALCLRLLTARSRTRAELAGQLAKRGYPEDIGNRVLDRLAAVGLVDDTDFAEQWVQSRRANAAKSKRALAAELHAKGVDDDVITTVLGGIDAGAERGRAEKLVRARLRREVLIDDGTDEARVSRRLVAMLARRGYGQTLACEVVIAELAAERERRRV</sequence>
<protein>
    <recommendedName>
        <fullName>Regulatory protein RecX</fullName>
    </recommendedName>
</protein>
<organism>
    <name type="scientific">Mycobacterium bovis (strain ATCC BAA-935 / AF2122/97)</name>
    <dbReference type="NCBI Taxonomy" id="233413"/>
    <lineage>
        <taxon>Bacteria</taxon>
        <taxon>Bacillati</taxon>
        <taxon>Actinomycetota</taxon>
        <taxon>Actinomycetes</taxon>
        <taxon>Mycobacteriales</taxon>
        <taxon>Mycobacteriaceae</taxon>
        <taxon>Mycobacterium</taxon>
        <taxon>Mycobacterium tuberculosis complex</taxon>
    </lineage>
</organism>
<comment type="function">
    <text evidence="1">Binds to RecA inhibiting ATP hydrolysis and the generation of heteroduplex DNA. It might act as an anti-recombinase to quell inappropriate recombinational repair during normal DNA metabolism. It is essential for cell survival (By similarity).</text>
</comment>
<comment type="subcellular location">
    <subcellularLocation>
        <location evidence="2">Cytoplasm</location>
    </subcellularLocation>
</comment>
<comment type="similarity">
    <text evidence="2">Belongs to the RecX family.</text>
</comment>
<reference key="1">
    <citation type="journal article" date="2003" name="Proc. Natl. Acad. Sci. U.S.A.">
        <title>The complete genome sequence of Mycobacterium bovis.</title>
        <authorList>
            <person name="Garnier T."/>
            <person name="Eiglmeier K."/>
            <person name="Camus J.-C."/>
            <person name="Medina N."/>
            <person name="Mansoor H."/>
            <person name="Pryor M."/>
            <person name="Duthoy S."/>
            <person name="Grondin S."/>
            <person name="Lacroix C."/>
            <person name="Monsempe C."/>
            <person name="Simon S."/>
            <person name="Harris B."/>
            <person name="Atkin R."/>
            <person name="Doggett J."/>
            <person name="Mayes R."/>
            <person name="Keating L."/>
            <person name="Wheeler P.R."/>
            <person name="Parkhill J."/>
            <person name="Barrell B.G."/>
            <person name="Cole S.T."/>
            <person name="Gordon S.V."/>
            <person name="Hewinson R.G."/>
        </authorList>
    </citation>
    <scope>NUCLEOTIDE SEQUENCE [LARGE SCALE GENOMIC DNA]</scope>
    <source>
        <strain>ATCC BAA-935 / AF2122/97</strain>
    </source>
</reference>
<reference key="2">
    <citation type="journal article" date="2017" name="Genome Announc.">
        <title>Updated reference genome sequence and annotation of Mycobacterium bovis AF2122/97.</title>
        <authorList>
            <person name="Malone K.M."/>
            <person name="Farrell D."/>
            <person name="Stuber T.P."/>
            <person name="Schubert O.T."/>
            <person name="Aebersold R."/>
            <person name="Robbe-Austerman S."/>
            <person name="Gordon S.V."/>
        </authorList>
    </citation>
    <scope>NUCLEOTIDE SEQUENCE [LARGE SCALE GENOMIC DNA]</scope>
    <scope>GENOME REANNOTATION</scope>
    <source>
        <strain>ATCC BAA-935 / AF2122/97</strain>
    </source>
</reference>
<dbReference type="EMBL" id="LT708304">
    <property type="protein sequence ID" value="SIU01373.1"/>
    <property type="molecule type" value="Genomic_DNA"/>
</dbReference>
<dbReference type="RefSeq" id="NP_856401.1">
    <property type="nucleotide sequence ID" value="NC_002945.3"/>
</dbReference>
<dbReference type="RefSeq" id="WP_003900562.1">
    <property type="nucleotide sequence ID" value="NC_002945.4"/>
</dbReference>
<dbReference type="SMR" id="P0A5U9"/>
<dbReference type="KEGG" id="mbo:BQ2027_MB2755C"/>
<dbReference type="PATRIC" id="fig|233413.5.peg.3018"/>
<dbReference type="Proteomes" id="UP000001419">
    <property type="component" value="Chromosome"/>
</dbReference>
<dbReference type="GO" id="GO:0005737">
    <property type="term" value="C:cytoplasm"/>
    <property type="evidence" value="ECO:0007669"/>
    <property type="project" value="UniProtKB-SubCell"/>
</dbReference>
<dbReference type="GO" id="GO:0006282">
    <property type="term" value="P:regulation of DNA repair"/>
    <property type="evidence" value="ECO:0007669"/>
    <property type="project" value="UniProtKB-UniRule"/>
</dbReference>
<dbReference type="FunFam" id="1.10.10.10:FF:000656">
    <property type="entry name" value="Regulatory protein RecX"/>
    <property type="match status" value="1"/>
</dbReference>
<dbReference type="Gene3D" id="1.10.10.10">
    <property type="entry name" value="Winged helix-like DNA-binding domain superfamily/Winged helix DNA-binding domain"/>
    <property type="match status" value="2"/>
</dbReference>
<dbReference type="HAMAP" id="MF_01114">
    <property type="entry name" value="RecX"/>
    <property type="match status" value="1"/>
</dbReference>
<dbReference type="InterPro" id="IPR053926">
    <property type="entry name" value="RecX_HTH_1st"/>
</dbReference>
<dbReference type="InterPro" id="IPR053924">
    <property type="entry name" value="RecX_HTH_2nd"/>
</dbReference>
<dbReference type="InterPro" id="IPR003783">
    <property type="entry name" value="Regulatory_RecX"/>
</dbReference>
<dbReference type="InterPro" id="IPR036388">
    <property type="entry name" value="WH-like_DNA-bd_sf"/>
</dbReference>
<dbReference type="NCBIfam" id="NF001056">
    <property type="entry name" value="PRK00117.3-1"/>
    <property type="match status" value="1"/>
</dbReference>
<dbReference type="PANTHER" id="PTHR33602">
    <property type="entry name" value="REGULATORY PROTEIN RECX FAMILY PROTEIN"/>
    <property type="match status" value="1"/>
</dbReference>
<dbReference type="PANTHER" id="PTHR33602:SF1">
    <property type="entry name" value="REGULATORY PROTEIN RECX FAMILY PROTEIN"/>
    <property type="match status" value="1"/>
</dbReference>
<dbReference type="Pfam" id="PF21982">
    <property type="entry name" value="RecX_HTH1"/>
    <property type="match status" value="1"/>
</dbReference>
<dbReference type="Pfam" id="PF02631">
    <property type="entry name" value="RecX_HTH2"/>
    <property type="match status" value="1"/>
</dbReference>
<evidence type="ECO:0000250" key="1"/>
<evidence type="ECO:0000305" key="2"/>
<feature type="chain" id="PRO_0000162451" description="Regulatory protein RecX">
    <location>
        <begin position="1"/>
        <end position="174"/>
    </location>
</feature>
<accession>P0A5U9</accession>
<accession>A0A1R3Y206</accession>
<accession>O33280</accession>
<accession>X2BLD9</accession>
<keyword id="KW-0963">Cytoplasm</keyword>
<keyword id="KW-1185">Reference proteome</keyword>
<name>RECX_MYCBO</name>